<evidence type="ECO:0000255" key="1">
    <source>
        <dbReference type="HAMAP-Rule" id="MF_00808"/>
    </source>
</evidence>
<reference key="1">
    <citation type="journal article" date="1993" name="Nucleic Acids Res.">
        <title>Complete sequence of Euglena gracilis chloroplast DNA.</title>
        <authorList>
            <person name="Hallick R.B."/>
            <person name="Hong L."/>
            <person name="Drager R.G."/>
            <person name="Favreau M.R."/>
            <person name="Monfort A."/>
            <person name="Orsat B."/>
            <person name="Spielmann A."/>
            <person name="Stutz E."/>
        </authorList>
    </citation>
    <scope>NUCLEOTIDE SEQUENCE [LARGE SCALE GENOMIC DNA]</scope>
    <source>
        <strain>Z / UTEX 753</strain>
    </source>
</reference>
<reference key="2">
    <citation type="journal article" date="1994" name="Genes Dev.">
        <title>A group III intron is formed from domains of two individual group II introns.</title>
        <authorList>
            <person name="Hong L."/>
            <person name="Hallick R.B."/>
        </authorList>
    </citation>
    <scope>NUCLEOTIDE SEQUENCE [GENOMIC DNA]</scope>
    <source>
        <strain>Z / UTEX 753</strain>
    </source>
</reference>
<reference key="3">
    <citation type="journal article" date="1989" name="Plant Mol. Biol.">
        <title>Nucleotide sequence of the psbB gene of Euglena gracilis.</title>
        <authorList>
            <person name="Keller M."/>
            <person name="Weil J.H."/>
            <person name="Nair C.K.K."/>
        </authorList>
    </citation>
    <scope>NUCLEOTIDE SEQUENCE [GENOMIC DNA] OF 1-8</scope>
    <source>
        <strain>Z / UTEX 753</strain>
    </source>
</reference>
<gene>
    <name evidence="1" type="primary">psbT</name>
    <name type="synonym">ycf8</name>
</gene>
<feature type="chain" id="PRO_0000217930" description="Photosystem II reaction center protein T">
    <location>
        <begin position="1"/>
        <end position="31"/>
    </location>
</feature>
<feature type="transmembrane region" description="Helical" evidence="1">
    <location>
        <begin position="3"/>
        <end position="23"/>
    </location>
</feature>
<name>PSBT_EUGGR</name>
<organism>
    <name type="scientific">Euglena gracilis</name>
    <dbReference type="NCBI Taxonomy" id="3039"/>
    <lineage>
        <taxon>Eukaryota</taxon>
        <taxon>Discoba</taxon>
        <taxon>Euglenozoa</taxon>
        <taxon>Euglenida</taxon>
        <taxon>Spirocuta</taxon>
        <taxon>Euglenophyceae</taxon>
        <taxon>Euglenales</taxon>
        <taxon>Euglenaceae</taxon>
        <taxon>Euglena</taxon>
    </lineage>
</organism>
<sequence length="31" mass="3607">MEALVYTFLLIGTLGVIFFAIFFRESPRINK</sequence>
<protein>
    <recommendedName>
        <fullName evidence="1">Photosystem II reaction center protein T</fullName>
        <shortName evidence="1">PSII-T</shortName>
    </recommendedName>
</protein>
<comment type="function">
    <text evidence="1">Found at the monomer-monomer interface of the photosystem II (PS II) dimer, plays a role in assembly and dimerization of PSII. PSII is a light-driven water plastoquinone oxidoreductase, using light energy to abstract electrons from H(2)O, generating a proton gradient subsequently used for ATP formation.</text>
</comment>
<comment type="subunit">
    <text evidence="1">PSII is composed of 1 copy each of membrane proteins PsbA, PsbB, PsbC, PsbD, PsbE, PsbF, PsbH, PsbI, PsbJ, PsbK, PsbL, PsbM, PsbT, PsbY, PsbZ, Psb30/Ycf12, at least 3 peripheral proteins of the oxygen-evolving complex and a large number of cofactors. It forms dimeric complexes.</text>
</comment>
<comment type="subcellular location">
    <subcellularLocation>
        <location evidence="1">Plastid</location>
        <location evidence="1">Chloroplast thylakoid membrane</location>
        <topology evidence="1">Single-pass membrane protein</topology>
    </subcellularLocation>
</comment>
<comment type="similarity">
    <text evidence="1">Belongs to the PsbT family.</text>
</comment>
<geneLocation type="chloroplast"/>
<proteinExistence type="inferred from homology"/>
<keyword id="KW-0150">Chloroplast</keyword>
<keyword id="KW-0472">Membrane</keyword>
<keyword id="KW-0602">Photosynthesis</keyword>
<keyword id="KW-0604">Photosystem II</keyword>
<keyword id="KW-0934">Plastid</keyword>
<keyword id="KW-0793">Thylakoid</keyword>
<keyword id="KW-0812">Transmembrane</keyword>
<keyword id="KW-1133">Transmembrane helix</keyword>
<accession>P20176</accession>
<dbReference type="EMBL" id="Z11874">
    <property type="status" value="NOT_ANNOTATED_CDS"/>
    <property type="molecule type" value="Genomic_DNA"/>
</dbReference>
<dbReference type="EMBL" id="X70810">
    <property type="protein sequence ID" value="CAA50132.1"/>
    <property type="molecule type" value="Genomic_DNA"/>
</dbReference>
<dbReference type="EMBL" id="X15903">
    <property type="protein sequence ID" value="CAA34017.1"/>
    <property type="status" value="ALT_SEQ"/>
    <property type="molecule type" value="Genomic_DNA"/>
</dbReference>
<dbReference type="PIR" id="S34917">
    <property type="entry name" value="A53841"/>
</dbReference>
<dbReference type="RefSeq" id="NP_041945.1">
    <property type="nucleotide sequence ID" value="NC_001603.2"/>
</dbReference>
<dbReference type="SMR" id="P20176"/>
<dbReference type="GeneID" id="807518"/>
<dbReference type="GO" id="GO:0009535">
    <property type="term" value="C:chloroplast thylakoid membrane"/>
    <property type="evidence" value="ECO:0007669"/>
    <property type="project" value="UniProtKB-SubCell"/>
</dbReference>
<dbReference type="GO" id="GO:0009539">
    <property type="term" value="C:photosystem II reaction center"/>
    <property type="evidence" value="ECO:0007669"/>
    <property type="project" value="InterPro"/>
</dbReference>
<dbReference type="GO" id="GO:0015979">
    <property type="term" value="P:photosynthesis"/>
    <property type="evidence" value="ECO:0007669"/>
    <property type="project" value="UniProtKB-UniRule"/>
</dbReference>
<dbReference type="HAMAP" id="MF_00808">
    <property type="entry name" value="PSII_PsbT"/>
    <property type="match status" value="1"/>
</dbReference>
<dbReference type="InterPro" id="IPR001743">
    <property type="entry name" value="PSII_PsbT"/>
</dbReference>
<dbReference type="InterPro" id="IPR037268">
    <property type="entry name" value="PSII_PsbT_sf"/>
</dbReference>
<dbReference type="PANTHER" id="PTHR36411">
    <property type="match status" value="1"/>
</dbReference>
<dbReference type="PANTHER" id="PTHR36411:SF2">
    <property type="entry name" value="PHOTOSYSTEM II REACTION CENTER PROTEIN T"/>
    <property type="match status" value="1"/>
</dbReference>
<dbReference type="Pfam" id="PF01405">
    <property type="entry name" value="PsbT"/>
    <property type="match status" value="1"/>
</dbReference>
<dbReference type="SUPFAM" id="SSF161029">
    <property type="entry name" value="Photosystem II reaction center protein T, PsbT"/>
    <property type="match status" value="1"/>
</dbReference>